<proteinExistence type="inferred from homology"/>
<gene>
    <name evidence="1" type="primary">pgk</name>
    <name type="ordered locus">Swit_2604</name>
</gene>
<accession>A5V9J6</accession>
<sequence length="397" mass="41395">MAFRTLDDIGDVRGKRVLVREDLNVPMEGAAVTDDTRLRSAAPTVAELADKGAIVLVLAHFGRPKGERNPEMSLALVTAAFRSVLGREVRFVGDCCGEEAEAAVAQLQPGDIALLENTRFHKGEEKNDPALAQAMAKLGDLYVNDAFSAAHRAHASTEGLARLLPAFAGRSMQAELEALEKALGKPEHPVAAVVGGAKVSTKLDVLKHLVARVDHLIIGGGMANTFLAARGVDVGKSLCEHDLKDTALAILDAADAADCIVHLPYDVVVAKEFKPNPPTRTVNVHEVAADEMILDVGPAAVEALGDALKTCRTLVWNGPLGAFETPPFDTATVALARTAAALTKGGSLVSVAGGGDTVAALNHAGVAGDFSFVSTAGGAFLEWMEGRELPGVKALEA</sequence>
<protein>
    <recommendedName>
        <fullName evidence="1">Phosphoglycerate kinase</fullName>
        <ecNumber evidence="1">2.7.2.3</ecNumber>
    </recommendedName>
</protein>
<keyword id="KW-0067">ATP-binding</keyword>
<keyword id="KW-0963">Cytoplasm</keyword>
<keyword id="KW-0324">Glycolysis</keyword>
<keyword id="KW-0418">Kinase</keyword>
<keyword id="KW-0547">Nucleotide-binding</keyword>
<keyword id="KW-1185">Reference proteome</keyword>
<keyword id="KW-0808">Transferase</keyword>
<comment type="catalytic activity">
    <reaction evidence="1">
        <text>(2R)-3-phosphoglycerate + ATP = (2R)-3-phospho-glyceroyl phosphate + ADP</text>
        <dbReference type="Rhea" id="RHEA:14801"/>
        <dbReference type="ChEBI" id="CHEBI:30616"/>
        <dbReference type="ChEBI" id="CHEBI:57604"/>
        <dbReference type="ChEBI" id="CHEBI:58272"/>
        <dbReference type="ChEBI" id="CHEBI:456216"/>
        <dbReference type="EC" id="2.7.2.3"/>
    </reaction>
</comment>
<comment type="pathway">
    <text evidence="1">Carbohydrate degradation; glycolysis; pyruvate from D-glyceraldehyde 3-phosphate: step 2/5.</text>
</comment>
<comment type="subunit">
    <text evidence="1">Monomer.</text>
</comment>
<comment type="subcellular location">
    <subcellularLocation>
        <location evidence="1">Cytoplasm</location>
    </subcellularLocation>
</comment>
<comment type="similarity">
    <text evidence="1">Belongs to the phosphoglycerate kinase family.</text>
</comment>
<evidence type="ECO:0000255" key="1">
    <source>
        <dbReference type="HAMAP-Rule" id="MF_00145"/>
    </source>
</evidence>
<reference key="1">
    <citation type="journal article" date="2010" name="J. Bacteriol.">
        <title>Genome sequence of the dioxin-mineralizing bacterium Sphingomonas wittichii RW1.</title>
        <authorList>
            <person name="Miller T.R."/>
            <person name="Delcher A.L."/>
            <person name="Salzberg S.L."/>
            <person name="Saunders E."/>
            <person name="Detter J.C."/>
            <person name="Halden R.U."/>
        </authorList>
    </citation>
    <scope>NUCLEOTIDE SEQUENCE [LARGE SCALE GENOMIC DNA]</scope>
    <source>
        <strain>DSM 6014 / CCUG 31198 / JCM 15750 / NBRC 105917 / EY 4224 / RW1</strain>
    </source>
</reference>
<feature type="chain" id="PRO_1000058073" description="Phosphoglycerate kinase">
    <location>
        <begin position="1"/>
        <end position="397"/>
    </location>
</feature>
<feature type="binding site" evidence="1">
    <location>
        <begin position="22"/>
        <end position="24"/>
    </location>
    <ligand>
        <name>substrate</name>
    </ligand>
</feature>
<feature type="binding site" evidence="1">
    <location>
        <position position="37"/>
    </location>
    <ligand>
        <name>substrate</name>
    </ligand>
</feature>
<feature type="binding site" evidence="1">
    <location>
        <begin position="60"/>
        <end position="63"/>
    </location>
    <ligand>
        <name>substrate</name>
    </ligand>
</feature>
<feature type="binding site" evidence="1">
    <location>
        <position position="119"/>
    </location>
    <ligand>
        <name>substrate</name>
    </ligand>
</feature>
<feature type="binding site" evidence="1">
    <location>
        <position position="152"/>
    </location>
    <ligand>
        <name>substrate</name>
    </ligand>
</feature>
<feature type="binding site" evidence="1">
    <location>
        <position position="202"/>
    </location>
    <ligand>
        <name>ATP</name>
        <dbReference type="ChEBI" id="CHEBI:30616"/>
    </ligand>
</feature>
<feature type="binding site" evidence="1">
    <location>
        <position position="324"/>
    </location>
    <ligand>
        <name>ATP</name>
        <dbReference type="ChEBI" id="CHEBI:30616"/>
    </ligand>
</feature>
<feature type="binding site" evidence="1">
    <location>
        <begin position="354"/>
        <end position="357"/>
    </location>
    <ligand>
        <name>ATP</name>
        <dbReference type="ChEBI" id="CHEBI:30616"/>
    </ligand>
</feature>
<name>PGK_RHIWR</name>
<organism>
    <name type="scientific">Rhizorhabdus wittichii (strain DSM 6014 / CCUG 31198 / JCM 15750 / NBRC 105917 / EY 4224 / RW1)</name>
    <name type="common">Sphingomonas wittichii</name>
    <dbReference type="NCBI Taxonomy" id="392499"/>
    <lineage>
        <taxon>Bacteria</taxon>
        <taxon>Pseudomonadati</taxon>
        <taxon>Pseudomonadota</taxon>
        <taxon>Alphaproteobacteria</taxon>
        <taxon>Sphingomonadales</taxon>
        <taxon>Sphingomonadaceae</taxon>
        <taxon>Rhizorhabdus</taxon>
    </lineage>
</organism>
<dbReference type="EC" id="2.7.2.3" evidence="1"/>
<dbReference type="EMBL" id="CP000699">
    <property type="protein sequence ID" value="ABQ68962.1"/>
    <property type="molecule type" value="Genomic_DNA"/>
</dbReference>
<dbReference type="SMR" id="A5V9J6"/>
<dbReference type="STRING" id="392499.Swit_2604"/>
<dbReference type="PaxDb" id="392499-Swit_2604"/>
<dbReference type="KEGG" id="swi:Swit_2604"/>
<dbReference type="eggNOG" id="COG0126">
    <property type="taxonomic scope" value="Bacteria"/>
</dbReference>
<dbReference type="HOGENOM" id="CLU_025427_0_2_5"/>
<dbReference type="OrthoDB" id="9808460at2"/>
<dbReference type="UniPathway" id="UPA00109">
    <property type="reaction ID" value="UER00185"/>
</dbReference>
<dbReference type="Proteomes" id="UP000001989">
    <property type="component" value="Chromosome"/>
</dbReference>
<dbReference type="GO" id="GO:0005829">
    <property type="term" value="C:cytosol"/>
    <property type="evidence" value="ECO:0007669"/>
    <property type="project" value="TreeGrafter"/>
</dbReference>
<dbReference type="GO" id="GO:0043531">
    <property type="term" value="F:ADP binding"/>
    <property type="evidence" value="ECO:0007669"/>
    <property type="project" value="TreeGrafter"/>
</dbReference>
<dbReference type="GO" id="GO:0005524">
    <property type="term" value="F:ATP binding"/>
    <property type="evidence" value="ECO:0007669"/>
    <property type="project" value="UniProtKB-KW"/>
</dbReference>
<dbReference type="GO" id="GO:0004618">
    <property type="term" value="F:phosphoglycerate kinase activity"/>
    <property type="evidence" value="ECO:0007669"/>
    <property type="project" value="UniProtKB-UniRule"/>
</dbReference>
<dbReference type="GO" id="GO:0006094">
    <property type="term" value="P:gluconeogenesis"/>
    <property type="evidence" value="ECO:0007669"/>
    <property type="project" value="TreeGrafter"/>
</dbReference>
<dbReference type="GO" id="GO:0006096">
    <property type="term" value="P:glycolytic process"/>
    <property type="evidence" value="ECO:0007669"/>
    <property type="project" value="UniProtKB-UniRule"/>
</dbReference>
<dbReference type="FunFam" id="3.40.50.1260:FF:000006">
    <property type="entry name" value="Phosphoglycerate kinase"/>
    <property type="match status" value="1"/>
</dbReference>
<dbReference type="FunFam" id="3.40.50.1260:FF:000031">
    <property type="entry name" value="Phosphoglycerate kinase 1"/>
    <property type="match status" value="1"/>
</dbReference>
<dbReference type="Gene3D" id="3.40.50.1260">
    <property type="entry name" value="Phosphoglycerate kinase, N-terminal domain"/>
    <property type="match status" value="2"/>
</dbReference>
<dbReference type="HAMAP" id="MF_00145">
    <property type="entry name" value="Phosphoglyc_kinase"/>
    <property type="match status" value="1"/>
</dbReference>
<dbReference type="InterPro" id="IPR001576">
    <property type="entry name" value="Phosphoglycerate_kinase"/>
</dbReference>
<dbReference type="InterPro" id="IPR015911">
    <property type="entry name" value="Phosphoglycerate_kinase_CS"/>
</dbReference>
<dbReference type="InterPro" id="IPR015824">
    <property type="entry name" value="Phosphoglycerate_kinase_N"/>
</dbReference>
<dbReference type="InterPro" id="IPR036043">
    <property type="entry name" value="Phosphoglycerate_kinase_sf"/>
</dbReference>
<dbReference type="PANTHER" id="PTHR11406">
    <property type="entry name" value="PHOSPHOGLYCERATE KINASE"/>
    <property type="match status" value="1"/>
</dbReference>
<dbReference type="PANTHER" id="PTHR11406:SF23">
    <property type="entry name" value="PHOSPHOGLYCERATE KINASE 1, CHLOROPLASTIC-RELATED"/>
    <property type="match status" value="1"/>
</dbReference>
<dbReference type="Pfam" id="PF00162">
    <property type="entry name" value="PGK"/>
    <property type="match status" value="1"/>
</dbReference>
<dbReference type="PIRSF" id="PIRSF000724">
    <property type="entry name" value="Pgk"/>
    <property type="match status" value="1"/>
</dbReference>
<dbReference type="PRINTS" id="PR00477">
    <property type="entry name" value="PHGLYCKINASE"/>
</dbReference>
<dbReference type="SUPFAM" id="SSF53748">
    <property type="entry name" value="Phosphoglycerate kinase"/>
    <property type="match status" value="1"/>
</dbReference>
<dbReference type="PROSITE" id="PS00111">
    <property type="entry name" value="PGLYCERATE_KINASE"/>
    <property type="match status" value="1"/>
</dbReference>